<evidence type="ECO:0000250" key="1"/>
<evidence type="ECO:0000255" key="2">
    <source>
        <dbReference type="PROSITE-ProRule" id="PRU00160"/>
    </source>
</evidence>
<evidence type="ECO:0000305" key="3"/>
<gene>
    <name type="ORF">DDB_G0292024</name>
</gene>
<name>TP4AA_DICDI</name>
<accession>Q54DU9</accession>
<dbReference type="EC" id="3.1.3.48"/>
<dbReference type="EMBL" id="AAFI02000187">
    <property type="protein sequence ID" value="EAL61368.1"/>
    <property type="molecule type" value="Genomic_DNA"/>
</dbReference>
<dbReference type="RefSeq" id="XP_629773.1">
    <property type="nucleotide sequence ID" value="XM_629771.1"/>
</dbReference>
<dbReference type="SMR" id="Q54DU9"/>
<dbReference type="FunCoup" id="Q54DU9">
    <property type="interactions" value="8"/>
</dbReference>
<dbReference type="STRING" id="44689.Q54DU9"/>
<dbReference type="PaxDb" id="44689-DDB0238561"/>
<dbReference type="EnsemblProtists" id="EAL61368">
    <property type="protein sequence ID" value="EAL61368"/>
    <property type="gene ID" value="DDB_G0292024"/>
</dbReference>
<dbReference type="GeneID" id="8628449"/>
<dbReference type="KEGG" id="ddi:DDB_G0292024"/>
<dbReference type="dictyBase" id="DDB_G0292024"/>
<dbReference type="VEuPathDB" id="AmoebaDB:DDB_G0292024"/>
<dbReference type="eggNOG" id="KOG2836">
    <property type="taxonomic scope" value="Eukaryota"/>
</dbReference>
<dbReference type="HOGENOM" id="CLU_099263_2_0_1"/>
<dbReference type="InParanoid" id="Q54DU9"/>
<dbReference type="OMA" id="IQVHGWT"/>
<dbReference type="PhylomeDB" id="Q54DU9"/>
<dbReference type="Reactome" id="R-DDI-8873719">
    <property type="pathway name" value="RAB geranylgeranylation"/>
</dbReference>
<dbReference type="PRO" id="PR:Q54DU9"/>
<dbReference type="Proteomes" id="UP000002195">
    <property type="component" value="Chromosome 6"/>
</dbReference>
<dbReference type="GO" id="GO:0005737">
    <property type="term" value="C:cytoplasm"/>
    <property type="evidence" value="ECO:0000318"/>
    <property type="project" value="GO_Central"/>
</dbReference>
<dbReference type="GO" id="GO:0016020">
    <property type="term" value="C:membrane"/>
    <property type="evidence" value="ECO:0007669"/>
    <property type="project" value="UniProtKB-SubCell"/>
</dbReference>
<dbReference type="GO" id="GO:0005634">
    <property type="term" value="C:nucleus"/>
    <property type="evidence" value="ECO:0000318"/>
    <property type="project" value="GO_Central"/>
</dbReference>
<dbReference type="GO" id="GO:0004725">
    <property type="term" value="F:protein tyrosine phosphatase activity"/>
    <property type="evidence" value="ECO:0000318"/>
    <property type="project" value="GO_Central"/>
</dbReference>
<dbReference type="CDD" id="cd14500">
    <property type="entry name" value="PTP-IVa"/>
    <property type="match status" value="1"/>
</dbReference>
<dbReference type="FunFam" id="3.90.190.10:FF:000086">
    <property type="entry name" value="Protein tyrosine phosphatase-like protein"/>
    <property type="match status" value="1"/>
</dbReference>
<dbReference type="Gene3D" id="3.90.190.10">
    <property type="entry name" value="Protein tyrosine phosphatase superfamily"/>
    <property type="match status" value="1"/>
</dbReference>
<dbReference type="InterPro" id="IPR022778">
    <property type="entry name" value="CDKN3"/>
</dbReference>
<dbReference type="InterPro" id="IPR029021">
    <property type="entry name" value="Prot-tyrosine_phosphatase-like"/>
</dbReference>
<dbReference type="InterPro" id="IPR050561">
    <property type="entry name" value="PTP"/>
</dbReference>
<dbReference type="InterPro" id="IPR003595">
    <property type="entry name" value="Tyr_Pase_cat"/>
</dbReference>
<dbReference type="InterPro" id="IPR000387">
    <property type="entry name" value="Tyr_Pase_dom"/>
</dbReference>
<dbReference type="InterPro" id="IPR020422">
    <property type="entry name" value="TYR_PHOSPHATASE_DUAL_dom"/>
</dbReference>
<dbReference type="PANTHER" id="PTHR23339">
    <property type="entry name" value="TYROSINE SPECIFIC PROTEIN PHOSPHATASE AND DUAL SPECIFICITY PROTEIN PHOSPHATASE"/>
    <property type="match status" value="1"/>
</dbReference>
<dbReference type="Pfam" id="PF05706">
    <property type="entry name" value="CDKN3"/>
    <property type="match status" value="1"/>
</dbReference>
<dbReference type="SMART" id="SM00404">
    <property type="entry name" value="PTPc_motif"/>
    <property type="match status" value="1"/>
</dbReference>
<dbReference type="SUPFAM" id="SSF52799">
    <property type="entry name" value="(Phosphotyrosine protein) phosphatases II"/>
    <property type="match status" value="1"/>
</dbReference>
<dbReference type="PROSITE" id="PS50056">
    <property type="entry name" value="TYR_PHOSPHATASE_2"/>
    <property type="match status" value="1"/>
</dbReference>
<dbReference type="PROSITE" id="PS50054">
    <property type="entry name" value="TYR_PHOSPHATASE_DUAL"/>
    <property type="match status" value="1"/>
</dbReference>
<protein>
    <recommendedName>
        <fullName>Probable protein tyrosine phosphatase type IVA A</fullName>
        <ecNumber>3.1.3.48</ecNumber>
    </recommendedName>
</protein>
<proteinExistence type="inferred from homology"/>
<organism>
    <name type="scientific">Dictyostelium discoideum</name>
    <name type="common">Social amoeba</name>
    <dbReference type="NCBI Taxonomy" id="44689"/>
    <lineage>
        <taxon>Eukaryota</taxon>
        <taxon>Amoebozoa</taxon>
        <taxon>Evosea</taxon>
        <taxon>Eumycetozoa</taxon>
        <taxon>Dictyostelia</taxon>
        <taxon>Dictyosteliales</taxon>
        <taxon>Dictyosteliaceae</taxon>
        <taxon>Dictyostelium</taxon>
    </lineage>
</organism>
<comment type="catalytic activity">
    <reaction>
        <text>O-phospho-L-tyrosyl-[protein] + H2O = L-tyrosyl-[protein] + phosphate</text>
        <dbReference type="Rhea" id="RHEA:10684"/>
        <dbReference type="Rhea" id="RHEA-COMP:10136"/>
        <dbReference type="Rhea" id="RHEA-COMP:20101"/>
        <dbReference type="ChEBI" id="CHEBI:15377"/>
        <dbReference type="ChEBI" id="CHEBI:43474"/>
        <dbReference type="ChEBI" id="CHEBI:46858"/>
        <dbReference type="ChEBI" id="CHEBI:61978"/>
        <dbReference type="EC" id="3.1.3.48"/>
    </reaction>
</comment>
<comment type="subcellular location">
    <subcellularLocation>
        <location evidence="3">Membrane</location>
        <topology evidence="3">Lipid-anchor</topology>
    </subcellularLocation>
</comment>
<comment type="similarity">
    <text evidence="3">Belongs to the protein-tyrosine phosphatase family.</text>
</comment>
<feature type="chain" id="PRO_0000329025" description="Probable protein tyrosine phosphatase type IVA A">
    <location>
        <begin position="1"/>
        <end position="163"/>
    </location>
</feature>
<feature type="propeptide" id="PRO_0000396656" description="Removed in mature form" evidence="1">
    <location>
        <begin position="164"/>
        <end position="166"/>
    </location>
</feature>
<feature type="domain" description="Tyrosine-protein phosphatase" evidence="2">
    <location>
        <begin position="10"/>
        <end position="164"/>
    </location>
</feature>
<feature type="active site" description="Proton donor" evidence="1">
    <location>
        <position position="75"/>
    </location>
</feature>
<feature type="active site" description="Phosphocysteine intermediate" evidence="2">
    <location>
        <position position="107"/>
    </location>
</feature>
<feature type="binding site" evidence="1">
    <location>
        <begin position="108"/>
        <end position="113"/>
    </location>
    <ligand>
        <name>phosphate</name>
        <dbReference type="ChEBI" id="CHEBI:43474"/>
    </ligand>
</feature>
<feature type="binding site" evidence="1">
    <location>
        <position position="113"/>
    </location>
    <ligand>
        <name>substrate</name>
    </ligand>
</feature>
<feature type="modified residue" description="Cysteine methyl ester" evidence="1">
    <location>
        <position position="163"/>
    </location>
</feature>
<feature type="lipid moiety-binding region" description="S-farnesyl cysteine" evidence="1">
    <location>
        <position position="163"/>
    </location>
</feature>
<feature type="disulfide bond" evidence="1">
    <location>
        <begin position="52"/>
        <end position="107"/>
    </location>
</feature>
<reference key="1">
    <citation type="journal article" date="2005" name="Nature">
        <title>The genome of the social amoeba Dictyostelium discoideum.</title>
        <authorList>
            <person name="Eichinger L."/>
            <person name="Pachebat J.A."/>
            <person name="Gloeckner G."/>
            <person name="Rajandream M.A."/>
            <person name="Sucgang R."/>
            <person name="Berriman M."/>
            <person name="Song J."/>
            <person name="Olsen R."/>
            <person name="Szafranski K."/>
            <person name="Xu Q."/>
            <person name="Tunggal B."/>
            <person name="Kummerfeld S."/>
            <person name="Madera M."/>
            <person name="Konfortov B.A."/>
            <person name="Rivero F."/>
            <person name="Bankier A.T."/>
            <person name="Lehmann R."/>
            <person name="Hamlin N."/>
            <person name="Davies R."/>
            <person name="Gaudet P."/>
            <person name="Fey P."/>
            <person name="Pilcher K."/>
            <person name="Chen G."/>
            <person name="Saunders D."/>
            <person name="Sodergren E.J."/>
            <person name="Davis P."/>
            <person name="Kerhornou A."/>
            <person name="Nie X."/>
            <person name="Hall N."/>
            <person name="Anjard C."/>
            <person name="Hemphill L."/>
            <person name="Bason N."/>
            <person name="Farbrother P."/>
            <person name="Desany B."/>
            <person name="Just E."/>
            <person name="Morio T."/>
            <person name="Rost R."/>
            <person name="Churcher C.M."/>
            <person name="Cooper J."/>
            <person name="Haydock S."/>
            <person name="van Driessche N."/>
            <person name="Cronin A."/>
            <person name="Goodhead I."/>
            <person name="Muzny D.M."/>
            <person name="Mourier T."/>
            <person name="Pain A."/>
            <person name="Lu M."/>
            <person name="Harper D."/>
            <person name="Lindsay R."/>
            <person name="Hauser H."/>
            <person name="James K.D."/>
            <person name="Quiles M."/>
            <person name="Madan Babu M."/>
            <person name="Saito T."/>
            <person name="Buchrieser C."/>
            <person name="Wardroper A."/>
            <person name="Felder M."/>
            <person name="Thangavelu M."/>
            <person name="Johnson D."/>
            <person name="Knights A."/>
            <person name="Loulseged H."/>
            <person name="Mungall K.L."/>
            <person name="Oliver K."/>
            <person name="Price C."/>
            <person name="Quail M.A."/>
            <person name="Urushihara H."/>
            <person name="Hernandez J."/>
            <person name="Rabbinowitsch E."/>
            <person name="Steffen D."/>
            <person name="Sanders M."/>
            <person name="Ma J."/>
            <person name="Kohara Y."/>
            <person name="Sharp S."/>
            <person name="Simmonds M.N."/>
            <person name="Spiegler S."/>
            <person name="Tivey A."/>
            <person name="Sugano S."/>
            <person name="White B."/>
            <person name="Walker D."/>
            <person name="Woodward J.R."/>
            <person name="Winckler T."/>
            <person name="Tanaka Y."/>
            <person name="Shaulsky G."/>
            <person name="Schleicher M."/>
            <person name="Weinstock G.M."/>
            <person name="Rosenthal A."/>
            <person name="Cox E.C."/>
            <person name="Chisholm R.L."/>
            <person name="Gibbs R.A."/>
            <person name="Loomis W.F."/>
            <person name="Platzer M."/>
            <person name="Kay R.R."/>
            <person name="Williams J.G."/>
            <person name="Dear P.H."/>
            <person name="Noegel A.A."/>
            <person name="Barrell B.G."/>
            <person name="Kuspa A."/>
        </authorList>
    </citation>
    <scope>NUCLEOTIDE SEQUENCE [LARGE SCALE GENOMIC DNA]</scope>
    <source>
        <strain>AX4</strain>
    </source>
</reference>
<keyword id="KW-1015">Disulfide bond</keyword>
<keyword id="KW-0378">Hydrolase</keyword>
<keyword id="KW-0449">Lipoprotein</keyword>
<keyword id="KW-0472">Membrane</keyword>
<keyword id="KW-0488">Methylation</keyword>
<keyword id="KW-0636">Prenylation</keyword>
<keyword id="KW-0904">Protein phosphatase</keyword>
<keyword id="KW-1185">Reference proteome</keyword>
<sequence length="166" mass="18422">MTGIRSALPNPASLVESSTHRFLIFDAPNDDNLPLYINELKKYNVSHLVRACDPTYSTEPLQAIGIQVHDMPFADGGSPPDAVVNNWIKILGESYKKDSKETIGIHCVAGLGRAPVLVAIALIEGGMNPLQAVEYIRERRRGSINIKQIQYLKNYKSKKKSSCRIM</sequence>